<protein>
    <recommendedName>
        <fullName evidence="4">Fatty acyl-CoA reductase wat</fullName>
    </recommendedName>
    <alternativeName>
        <fullName evidence="3">Protein waterproof</fullName>
        <ecNumber evidence="2">1.2.1.84</ecNumber>
    </alternativeName>
</protein>
<comment type="function">
    <text evidence="2">Catalyzes the reduction of saturated fatty acyl-CoA to fatty alcohols. The preferred substrates are C24:0 and C26:0. Necessary for the final stages of tracheal maturation, to facilitate the transition from water-filled to gas-filled tubes. May help to maintain the integrity of the outer hydrophobic envelope of the trachea.</text>
</comment>
<comment type="catalytic activity">
    <reaction evidence="2">
        <text>a long-chain fatty acyl-CoA + 2 NADPH + 2 H(+) = a long-chain primary fatty alcohol + 2 NADP(+) + CoA</text>
        <dbReference type="Rhea" id="RHEA:52716"/>
        <dbReference type="ChEBI" id="CHEBI:15378"/>
        <dbReference type="ChEBI" id="CHEBI:57287"/>
        <dbReference type="ChEBI" id="CHEBI:57783"/>
        <dbReference type="ChEBI" id="CHEBI:58349"/>
        <dbReference type="ChEBI" id="CHEBI:77396"/>
        <dbReference type="ChEBI" id="CHEBI:83139"/>
        <dbReference type="EC" id="1.2.1.84"/>
    </reaction>
</comment>
<comment type="subcellular location">
    <subcellularLocation>
        <location evidence="5">Apical cell membrane</location>
        <topology evidence="1">Multi-pass membrane protein</topology>
    </subcellularLocation>
</comment>
<comment type="developmental stage">
    <text evidence="2">Detected in the tracheal system and hindgut from embryonic stage 13 onwards (at protein level).</text>
</comment>
<comment type="disruption phenotype">
    <text evidence="2">Tracheal morphogenesis in embryos is grossly normal. The tracheal tubes fail to fill with gas during the final stages of maturation, and instead remain full of fluid. The hydrophobic outer cuticle layer of the trachea appears to be disrupted and forms membranous structures extending into the tracheal lumen.</text>
</comment>
<comment type="similarity">
    <text evidence="4">Belongs to the fatty acyl-CoA reductase family.</text>
</comment>
<accession>Q8MS59</accession>
<accession>Q9VAR3</accession>
<reference evidence="8" key="1">
    <citation type="journal article" date="2000" name="Science">
        <title>The genome sequence of Drosophila melanogaster.</title>
        <authorList>
            <person name="Adams M.D."/>
            <person name="Celniker S.E."/>
            <person name="Holt R.A."/>
            <person name="Evans C.A."/>
            <person name="Gocayne J.D."/>
            <person name="Amanatides P.G."/>
            <person name="Scherer S.E."/>
            <person name="Li P.W."/>
            <person name="Hoskins R.A."/>
            <person name="Galle R.F."/>
            <person name="George R.A."/>
            <person name="Lewis S.E."/>
            <person name="Richards S."/>
            <person name="Ashburner M."/>
            <person name="Henderson S.N."/>
            <person name="Sutton G.G."/>
            <person name="Wortman J.R."/>
            <person name="Yandell M.D."/>
            <person name="Zhang Q."/>
            <person name="Chen L.X."/>
            <person name="Brandon R.C."/>
            <person name="Rogers Y.-H.C."/>
            <person name="Blazej R.G."/>
            <person name="Champe M."/>
            <person name="Pfeiffer B.D."/>
            <person name="Wan K.H."/>
            <person name="Doyle C."/>
            <person name="Baxter E.G."/>
            <person name="Helt G."/>
            <person name="Nelson C.R."/>
            <person name="Miklos G.L.G."/>
            <person name="Abril J.F."/>
            <person name="Agbayani A."/>
            <person name="An H.-J."/>
            <person name="Andrews-Pfannkoch C."/>
            <person name="Baldwin D."/>
            <person name="Ballew R.M."/>
            <person name="Basu A."/>
            <person name="Baxendale J."/>
            <person name="Bayraktaroglu L."/>
            <person name="Beasley E.M."/>
            <person name="Beeson K.Y."/>
            <person name="Benos P.V."/>
            <person name="Berman B.P."/>
            <person name="Bhandari D."/>
            <person name="Bolshakov S."/>
            <person name="Borkova D."/>
            <person name="Botchan M.R."/>
            <person name="Bouck J."/>
            <person name="Brokstein P."/>
            <person name="Brottier P."/>
            <person name="Burtis K.C."/>
            <person name="Busam D.A."/>
            <person name="Butler H."/>
            <person name="Cadieu E."/>
            <person name="Center A."/>
            <person name="Chandra I."/>
            <person name="Cherry J.M."/>
            <person name="Cawley S."/>
            <person name="Dahlke C."/>
            <person name="Davenport L.B."/>
            <person name="Davies P."/>
            <person name="de Pablos B."/>
            <person name="Delcher A."/>
            <person name="Deng Z."/>
            <person name="Mays A.D."/>
            <person name="Dew I."/>
            <person name="Dietz S.M."/>
            <person name="Dodson K."/>
            <person name="Doup L.E."/>
            <person name="Downes M."/>
            <person name="Dugan-Rocha S."/>
            <person name="Dunkov B.C."/>
            <person name="Dunn P."/>
            <person name="Durbin K.J."/>
            <person name="Evangelista C.C."/>
            <person name="Ferraz C."/>
            <person name="Ferriera S."/>
            <person name="Fleischmann W."/>
            <person name="Fosler C."/>
            <person name="Gabrielian A.E."/>
            <person name="Garg N.S."/>
            <person name="Gelbart W.M."/>
            <person name="Glasser K."/>
            <person name="Glodek A."/>
            <person name="Gong F."/>
            <person name="Gorrell J.H."/>
            <person name="Gu Z."/>
            <person name="Guan P."/>
            <person name="Harris M."/>
            <person name="Harris N.L."/>
            <person name="Harvey D.A."/>
            <person name="Heiman T.J."/>
            <person name="Hernandez J.R."/>
            <person name="Houck J."/>
            <person name="Hostin D."/>
            <person name="Houston K.A."/>
            <person name="Howland T.J."/>
            <person name="Wei M.-H."/>
            <person name="Ibegwam C."/>
            <person name="Jalali M."/>
            <person name="Kalush F."/>
            <person name="Karpen G.H."/>
            <person name="Ke Z."/>
            <person name="Kennison J.A."/>
            <person name="Ketchum K.A."/>
            <person name="Kimmel B.E."/>
            <person name="Kodira C.D."/>
            <person name="Kraft C.L."/>
            <person name="Kravitz S."/>
            <person name="Kulp D."/>
            <person name="Lai Z."/>
            <person name="Lasko P."/>
            <person name="Lei Y."/>
            <person name="Levitsky A.A."/>
            <person name="Li J.H."/>
            <person name="Li Z."/>
            <person name="Liang Y."/>
            <person name="Lin X."/>
            <person name="Liu X."/>
            <person name="Mattei B."/>
            <person name="McIntosh T.C."/>
            <person name="McLeod M.P."/>
            <person name="McPherson D."/>
            <person name="Merkulov G."/>
            <person name="Milshina N.V."/>
            <person name="Mobarry C."/>
            <person name="Morris J."/>
            <person name="Moshrefi A."/>
            <person name="Mount S.M."/>
            <person name="Moy M."/>
            <person name="Murphy B."/>
            <person name="Murphy L."/>
            <person name="Muzny D.M."/>
            <person name="Nelson D.L."/>
            <person name="Nelson D.R."/>
            <person name="Nelson K.A."/>
            <person name="Nixon K."/>
            <person name="Nusskern D.R."/>
            <person name="Pacleb J.M."/>
            <person name="Palazzolo M."/>
            <person name="Pittman G.S."/>
            <person name="Pan S."/>
            <person name="Pollard J."/>
            <person name="Puri V."/>
            <person name="Reese M.G."/>
            <person name="Reinert K."/>
            <person name="Remington K."/>
            <person name="Saunders R.D.C."/>
            <person name="Scheeler F."/>
            <person name="Shen H."/>
            <person name="Shue B.C."/>
            <person name="Siden-Kiamos I."/>
            <person name="Simpson M."/>
            <person name="Skupski M.P."/>
            <person name="Smith T.J."/>
            <person name="Spier E."/>
            <person name="Spradling A.C."/>
            <person name="Stapleton M."/>
            <person name="Strong R."/>
            <person name="Sun E."/>
            <person name="Svirskas R."/>
            <person name="Tector C."/>
            <person name="Turner R."/>
            <person name="Venter E."/>
            <person name="Wang A.H."/>
            <person name="Wang X."/>
            <person name="Wang Z.-Y."/>
            <person name="Wassarman D.A."/>
            <person name="Weinstock G.M."/>
            <person name="Weissenbach J."/>
            <person name="Williams S.M."/>
            <person name="Woodage T."/>
            <person name="Worley K.C."/>
            <person name="Wu D."/>
            <person name="Yang S."/>
            <person name="Yao Q.A."/>
            <person name="Ye J."/>
            <person name="Yeh R.-F."/>
            <person name="Zaveri J.S."/>
            <person name="Zhan M."/>
            <person name="Zhang G."/>
            <person name="Zhao Q."/>
            <person name="Zheng L."/>
            <person name="Zheng X.H."/>
            <person name="Zhong F.N."/>
            <person name="Zhong W."/>
            <person name="Zhou X."/>
            <person name="Zhu S.C."/>
            <person name="Zhu X."/>
            <person name="Smith H.O."/>
            <person name="Gibbs R.A."/>
            <person name="Myers E.W."/>
            <person name="Rubin G.M."/>
            <person name="Venter J.C."/>
        </authorList>
    </citation>
    <scope>NUCLEOTIDE SEQUENCE [LARGE SCALE GENOMIC DNA]</scope>
    <source>
        <strain evidence="8">Berkeley</strain>
    </source>
</reference>
<reference evidence="8" key="2">
    <citation type="journal article" date="2002" name="Genome Biol.">
        <title>Annotation of the Drosophila melanogaster euchromatic genome: a systematic review.</title>
        <authorList>
            <person name="Misra S."/>
            <person name="Crosby M.A."/>
            <person name="Mungall C.J."/>
            <person name="Matthews B.B."/>
            <person name="Campbell K.S."/>
            <person name="Hradecky P."/>
            <person name="Huang Y."/>
            <person name="Kaminker J.S."/>
            <person name="Millburn G.H."/>
            <person name="Prochnik S.E."/>
            <person name="Smith C.D."/>
            <person name="Tupy J.L."/>
            <person name="Whitfield E.J."/>
            <person name="Bayraktaroglu L."/>
            <person name="Berman B.P."/>
            <person name="Bettencourt B.R."/>
            <person name="Celniker S.E."/>
            <person name="de Grey A.D.N.J."/>
            <person name="Drysdale R.A."/>
            <person name="Harris N.L."/>
            <person name="Richter J."/>
            <person name="Russo S."/>
            <person name="Schroeder A.J."/>
            <person name="Shu S.Q."/>
            <person name="Stapleton M."/>
            <person name="Yamada C."/>
            <person name="Ashburner M."/>
            <person name="Gelbart W.M."/>
            <person name="Rubin G.M."/>
            <person name="Lewis S.E."/>
        </authorList>
    </citation>
    <scope>GENOME REANNOTATION</scope>
    <source>
        <strain evidence="8">Berkeley</strain>
    </source>
</reference>
<reference evidence="6" key="3">
    <citation type="journal article" date="2002" name="Genome Biol.">
        <title>A Drosophila full-length cDNA resource.</title>
        <authorList>
            <person name="Stapleton M."/>
            <person name="Carlson J.W."/>
            <person name="Brokstein P."/>
            <person name="Yu C."/>
            <person name="Champe M."/>
            <person name="George R.A."/>
            <person name="Guarin H."/>
            <person name="Kronmiller B."/>
            <person name="Pacleb J.M."/>
            <person name="Park S."/>
            <person name="Wan K.H."/>
            <person name="Rubin G.M."/>
            <person name="Celniker S.E."/>
        </authorList>
    </citation>
    <scope>NUCLEOTIDE SEQUENCE [LARGE SCALE MRNA]</scope>
    <source>
        <strain evidence="6">Berkeley</strain>
        <tissue evidence="6">Larva</tissue>
        <tissue evidence="6">Pupae</tissue>
    </source>
</reference>
<reference evidence="4" key="4">
    <citation type="journal article" date="2014" name="Dev. Biol.">
        <title>The fatty acyl-CoA reductase Waterproof mediates airway clearance in Drosophila.</title>
        <authorList>
            <person name="Jaspers M.H."/>
            <person name="Pflanz R."/>
            <person name="Riedel D."/>
            <person name="Kawelke S."/>
            <person name="Feussner I."/>
            <person name="Schuh R."/>
        </authorList>
    </citation>
    <scope>FUNCTION</scope>
    <scope>CATALYTIC ACTIVITY</scope>
    <scope>SUBCELLULAR LOCATION</scope>
    <scope>DEVELOPMENTAL STAGE</scope>
    <scope>DISRUPTION PHENOTYPE</scope>
</reference>
<feature type="chain" id="PRO_0000438526" description="Fatty acyl-CoA reductase wat">
    <location>
        <begin position="1"/>
        <end position="517"/>
    </location>
</feature>
<feature type="transmembrane region" description="Helical" evidence="1">
    <location>
        <begin position="378"/>
        <end position="398"/>
    </location>
</feature>
<feature type="transmembrane region" description="Helical" evidence="1">
    <location>
        <begin position="492"/>
        <end position="512"/>
    </location>
</feature>
<sequence length="517" mass="59515">MDDPKIMNIMNGMKSLEDHCQLISDVKDESPMQMFYKDKGVFLTGGTGFFGKIIIEKLLRVTEVGQIYLLIRTKKGKDAFARIEDLFNDPVFAKMKQVNPKYRCQITIISGDCSLPGLGISADERETIMENVNIVLHSAATVRFDEKLKMAIAINVHGTKEIIKLAKEIVNLKALVHVSTAFAHCNMRHIQERFYSGTMSGENAFKLSECLDEHTLNTLTPTIIKGYPNTYTFTKVLAENVVQQSAQNLPVTIFRPGIVITTYREPVTGWIDNMYGPCGVIVGIGSGVLRVFTGDMDNKAHIVPVDMCVNALLASAWDIARNKYETPPIYNYVPDAENMVTWRRYMEDGFEYGCDIPMRKSIWYPRFTIVPHMWQYHILCFLYHTLPALVMDAIMVIIGKKPRMMKIYRKIHKLSNVLKYFSSNEFRFDNDNVRKLTEKLDDRDKRLFAFDMRDLDWTNLFRVSLYGLRLYVVKDDPSNIPESIKRYERLKVLHYTTLAVFYALAAWALYALLKLFL</sequence>
<evidence type="ECO:0000255" key="1"/>
<evidence type="ECO:0000269" key="2">
    <source>
    </source>
</evidence>
<evidence type="ECO:0000303" key="3">
    <source>
    </source>
</evidence>
<evidence type="ECO:0000305" key="4"/>
<evidence type="ECO:0000305" key="5">
    <source>
    </source>
</evidence>
<evidence type="ECO:0000312" key="6">
    <source>
        <dbReference type="EMBL" id="AAM50938.1"/>
    </source>
</evidence>
<evidence type="ECO:0000312" key="7">
    <source>
        <dbReference type="FlyBase" id="FBgn0039620"/>
    </source>
</evidence>
<evidence type="ECO:0000312" key="8">
    <source>
        <dbReference type="Proteomes" id="UP000000803"/>
    </source>
</evidence>
<organism evidence="8">
    <name type="scientific">Drosophila melanogaster</name>
    <name type="common">Fruit fly</name>
    <dbReference type="NCBI Taxonomy" id="7227"/>
    <lineage>
        <taxon>Eukaryota</taxon>
        <taxon>Metazoa</taxon>
        <taxon>Ecdysozoa</taxon>
        <taxon>Arthropoda</taxon>
        <taxon>Hexapoda</taxon>
        <taxon>Insecta</taxon>
        <taxon>Pterygota</taxon>
        <taxon>Neoptera</taxon>
        <taxon>Endopterygota</taxon>
        <taxon>Diptera</taxon>
        <taxon>Brachycera</taxon>
        <taxon>Muscomorpha</taxon>
        <taxon>Ephydroidea</taxon>
        <taxon>Drosophilidae</taxon>
        <taxon>Drosophila</taxon>
        <taxon>Sophophora</taxon>
    </lineage>
</organism>
<gene>
    <name evidence="3" type="primary">wat</name>
    <name evidence="7" type="ORF">CG1443</name>
</gene>
<name>WAT_DROME</name>
<keyword id="KW-1003">Cell membrane</keyword>
<keyword id="KW-0444">Lipid biosynthesis</keyword>
<keyword id="KW-0443">Lipid metabolism</keyword>
<keyword id="KW-0472">Membrane</keyword>
<keyword id="KW-0521">NADP</keyword>
<keyword id="KW-0560">Oxidoreductase</keyword>
<keyword id="KW-1185">Reference proteome</keyword>
<keyword id="KW-0812">Transmembrane</keyword>
<keyword id="KW-1133">Transmembrane helix</keyword>
<proteinExistence type="evidence at protein level"/>
<dbReference type="EC" id="1.2.1.84" evidence="2"/>
<dbReference type="EMBL" id="AE014297">
    <property type="protein sequence ID" value="AAF56838.2"/>
    <property type="molecule type" value="Genomic_DNA"/>
</dbReference>
<dbReference type="EMBL" id="AY119078">
    <property type="protein sequence ID" value="AAM50938.1"/>
    <property type="molecule type" value="mRNA"/>
</dbReference>
<dbReference type="RefSeq" id="NP_651652.2">
    <property type="nucleotide sequence ID" value="NM_143395.1"/>
</dbReference>
<dbReference type="SMR" id="Q8MS59"/>
<dbReference type="FunCoup" id="Q8MS59">
    <property type="interactions" value="91"/>
</dbReference>
<dbReference type="IntAct" id="Q8MS59">
    <property type="interactions" value="25"/>
</dbReference>
<dbReference type="STRING" id="7227.FBpp0084714"/>
<dbReference type="PaxDb" id="7227-FBpp0084714"/>
<dbReference type="DNASU" id="43420"/>
<dbReference type="EnsemblMetazoa" id="FBtr0085345">
    <property type="protein sequence ID" value="FBpp0084714"/>
    <property type="gene ID" value="FBgn0039620"/>
</dbReference>
<dbReference type="GeneID" id="43420"/>
<dbReference type="KEGG" id="dme:Dmel_CG1443"/>
<dbReference type="UCSC" id="CG1443-RA">
    <property type="organism name" value="d. melanogaster"/>
</dbReference>
<dbReference type="AGR" id="FB:FBgn0039620"/>
<dbReference type="CTD" id="43420"/>
<dbReference type="FlyBase" id="FBgn0039620">
    <property type="gene designation" value="wat"/>
</dbReference>
<dbReference type="VEuPathDB" id="VectorBase:FBgn0039620"/>
<dbReference type="eggNOG" id="KOG1221">
    <property type="taxonomic scope" value="Eukaryota"/>
</dbReference>
<dbReference type="GeneTree" id="ENSGT00390000006367"/>
<dbReference type="HOGENOM" id="CLU_024661_0_2_1"/>
<dbReference type="InParanoid" id="Q8MS59"/>
<dbReference type="OMA" id="FAHCNMR"/>
<dbReference type="OrthoDB" id="429813at2759"/>
<dbReference type="PhylomeDB" id="Q8MS59"/>
<dbReference type="BRENDA" id="1.2.1.84">
    <property type="organism ID" value="1994"/>
</dbReference>
<dbReference type="Reactome" id="R-DME-9640463">
    <property type="pathway name" value="Wax biosynthesis"/>
</dbReference>
<dbReference type="BioGRID-ORCS" id="43420">
    <property type="hits" value="0 hits in 3 CRISPR screens"/>
</dbReference>
<dbReference type="GenomeRNAi" id="43420"/>
<dbReference type="PRO" id="PR:Q8MS59"/>
<dbReference type="Proteomes" id="UP000000803">
    <property type="component" value="Chromosome 3R"/>
</dbReference>
<dbReference type="Bgee" id="FBgn0039620">
    <property type="expression patterns" value="Expressed in crop (Drosophila) and 113 other cell types or tissues"/>
</dbReference>
<dbReference type="GO" id="GO:0045177">
    <property type="term" value="C:apical part of cell"/>
    <property type="evidence" value="ECO:0000314"/>
    <property type="project" value="FlyBase"/>
</dbReference>
<dbReference type="GO" id="GO:0016324">
    <property type="term" value="C:apical plasma membrane"/>
    <property type="evidence" value="ECO:0007669"/>
    <property type="project" value="UniProtKB-SubCell"/>
</dbReference>
<dbReference type="GO" id="GO:0005737">
    <property type="term" value="C:cytoplasm"/>
    <property type="evidence" value="ECO:0000314"/>
    <property type="project" value="FlyBase"/>
</dbReference>
<dbReference type="GO" id="GO:0005777">
    <property type="term" value="C:peroxisome"/>
    <property type="evidence" value="ECO:0000318"/>
    <property type="project" value="GO_Central"/>
</dbReference>
<dbReference type="GO" id="GO:0102965">
    <property type="term" value="F:alcohol-forming long-chain fatty acyl-CoA reductase activity"/>
    <property type="evidence" value="ECO:0000250"/>
    <property type="project" value="FlyBase"/>
</dbReference>
<dbReference type="GO" id="GO:0080019">
    <property type="term" value="F:alcohol-forming very long-chain fatty acyl-CoA reductase activity"/>
    <property type="evidence" value="ECO:0000314"/>
    <property type="project" value="FlyBase"/>
</dbReference>
<dbReference type="GO" id="GO:0035002">
    <property type="term" value="P:liquid clearance, open tracheal system"/>
    <property type="evidence" value="ECO:0000315"/>
    <property type="project" value="FlyBase"/>
</dbReference>
<dbReference type="GO" id="GO:0035336">
    <property type="term" value="P:long-chain fatty-acyl-CoA metabolic process"/>
    <property type="evidence" value="ECO:0000314"/>
    <property type="project" value="FlyBase"/>
</dbReference>
<dbReference type="GO" id="GO:0035149">
    <property type="term" value="P:lumen formation, open tracheal system"/>
    <property type="evidence" value="ECO:0000315"/>
    <property type="project" value="FlyBase"/>
</dbReference>
<dbReference type="CDD" id="cd05236">
    <property type="entry name" value="FAR-N_SDR_e"/>
    <property type="match status" value="1"/>
</dbReference>
<dbReference type="CDD" id="cd09071">
    <property type="entry name" value="FAR_C"/>
    <property type="match status" value="1"/>
</dbReference>
<dbReference type="FunFam" id="3.40.50.720:FF:000143">
    <property type="entry name" value="Fatty acyl-CoA reductase"/>
    <property type="match status" value="1"/>
</dbReference>
<dbReference type="Gene3D" id="3.40.50.720">
    <property type="entry name" value="NAD(P)-binding Rossmann-like Domain"/>
    <property type="match status" value="1"/>
</dbReference>
<dbReference type="InterPro" id="IPR026055">
    <property type="entry name" value="FAR"/>
</dbReference>
<dbReference type="InterPro" id="IPR033640">
    <property type="entry name" value="FAR_C"/>
</dbReference>
<dbReference type="InterPro" id="IPR013120">
    <property type="entry name" value="Far_NAD-bd"/>
</dbReference>
<dbReference type="InterPro" id="IPR036291">
    <property type="entry name" value="NAD(P)-bd_dom_sf"/>
</dbReference>
<dbReference type="PANTHER" id="PTHR11011:SF60">
    <property type="entry name" value="FATTY ACYL-COA REDUCTASE-RELATED"/>
    <property type="match status" value="1"/>
</dbReference>
<dbReference type="PANTHER" id="PTHR11011">
    <property type="entry name" value="MALE STERILITY PROTEIN 2-RELATED"/>
    <property type="match status" value="1"/>
</dbReference>
<dbReference type="Pfam" id="PF07993">
    <property type="entry name" value="NAD_binding_4"/>
    <property type="match status" value="1"/>
</dbReference>
<dbReference type="Pfam" id="PF03015">
    <property type="entry name" value="Sterile"/>
    <property type="match status" value="1"/>
</dbReference>
<dbReference type="SUPFAM" id="SSF51735">
    <property type="entry name" value="NAD(P)-binding Rossmann-fold domains"/>
    <property type="match status" value="1"/>
</dbReference>